<sequence length="95" mass="10678">MTKSELIESLAGKYPHLSPRDIEHAIKEMIGCMSEALAGGERIEIRGFGSFSLHHRPPRVGRNPKTGESVHLPSRRVPHFKPGKELRDRVNSIKD</sequence>
<accession>Q608S8</accession>
<keyword id="KW-0233">DNA recombination</keyword>
<keyword id="KW-0238">DNA-binding</keyword>
<keyword id="KW-1185">Reference proteome</keyword>
<keyword id="KW-0804">Transcription</keyword>
<keyword id="KW-0805">Transcription regulation</keyword>
<keyword id="KW-0810">Translation regulation</keyword>
<evidence type="ECO:0000255" key="1">
    <source>
        <dbReference type="HAMAP-Rule" id="MF_00381"/>
    </source>
</evidence>
<evidence type="ECO:0000256" key="2">
    <source>
        <dbReference type="SAM" id="MobiDB-lite"/>
    </source>
</evidence>
<protein>
    <recommendedName>
        <fullName evidence="1">Integration host factor subunit beta</fullName>
        <shortName evidence="1">IHF-beta</shortName>
    </recommendedName>
</protein>
<reference key="1">
    <citation type="journal article" date="2004" name="PLoS Biol.">
        <title>Genomic insights into methanotrophy: the complete genome sequence of Methylococcus capsulatus (Bath).</title>
        <authorList>
            <person name="Ward N.L."/>
            <person name="Larsen O."/>
            <person name="Sakwa J."/>
            <person name="Bruseth L."/>
            <person name="Khouri H.M."/>
            <person name="Durkin A.S."/>
            <person name="Dimitrov G."/>
            <person name="Jiang L."/>
            <person name="Scanlan D."/>
            <person name="Kang K.H."/>
            <person name="Lewis M.R."/>
            <person name="Nelson K.E."/>
            <person name="Methe B.A."/>
            <person name="Wu M."/>
            <person name="Heidelberg J.F."/>
            <person name="Paulsen I.T."/>
            <person name="Fouts D.E."/>
            <person name="Ravel J."/>
            <person name="Tettelin H."/>
            <person name="Ren Q."/>
            <person name="Read T.D."/>
            <person name="DeBoy R.T."/>
            <person name="Seshadri R."/>
            <person name="Salzberg S.L."/>
            <person name="Jensen H.B."/>
            <person name="Birkeland N.K."/>
            <person name="Nelson W.C."/>
            <person name="Dodson R.J."/>
            <person name="Grindhaug S.H."/>
            <person name="Holt I.E."/>
            <person name="Eidhammer I."/>
            <person name="Jonasen I."/>
            <person name="Vanaken S."/>
            <person name="Utterback T.R."/>
            <person name="Feldblyum T.V."/>
            <person name="Fraser C.M."/>
            <person name="Lillehaug J.R."/>
            <person name="Eisen J.A."/>
        </authorList>
    </citation>
    <scope>NUCLEOTIDE SEQUENCE [LARGE SCALE GENOMIC DNA]</scope>
    <source>
        <strain>ATCC 33009 / NCIMB 11132 / Bath</strain>
    </source>
</reference>
<comment type="function">
    <text evidence="1">This protein is one of the two subunits of integration host factor, a specific DNA-binding protein that functions in genetic recombination as well as in transcriptional and translational control.</text>
</comment>
<comment type="subunit">
    <text evidence="1">Heterodimer of an alpha and a beta chain.</text>
</comment>
<comment type="similarity">
    <text evidence="1">Belongs to the bacterial histone-like protein family.</text>
</comment>
<feature type="chain" id="PRO_1000060619" description="Integration host factor subunit beta">
    <location>
        <begin position="1"/>
        <end position="95"/>
    </location>
</feature>
<feature type="region of interest" description="Disordered" evidence="2">
    <location>
        <begin position="52"/>
        <end position="95"/>
    </location>
</feature>
<feature type="compositionally biased region" description="Basic and acidic residues" evidence="2">
    <location>
        <begin position="82"/>
        <end position="95"/>
    </location>
</feature>
<dbReference type="EMBL" id="AE017282">
    <property type="protein sequence ID" value="AAU92310.1"/>
    <property type="molecule type" value="Genomic_DNA"/>
</dbReference>
<dbReference type="RefSeq" id="WP_010960688.1">
    <property type="nucleotide sequence ID" value="NC_002977.6"/>
</dbReference>
<dbReference type="SMR" id="Q608S8"/>
<dbReference type="STRING" id="243233.MCA1411"/>
<dbReference type="GeneID" id="88223685"/>
<dbReference type="KEGG" id="mca:MCA1411"/>
<dbReference type="eggNOG" id="COG0776">
    <property type="taxonomic scope" value="Bacteria"/>
</dbReference>
<dbReference type="HOGENOM" id="CLU_105066_2_0_6"/>
<dbReference type="Proteomes" id="UP000006821">
    <property type="component" value="Chromosome"/>
</dbReference>
<dbReference type="GO" id="GO:0005694">
    <property type="term" value="C:chromosome"/>
    <property type="evidence" value="ECO:0007669"/>
    <property type="project" value="InterPro"/>
</dbReference>
<dbReference type="GO" id="GO:0005829">
    <property type="term" value="C:cytosol"/>
    <property type="evidence" value="ECO:0007669"/>
    <property type="project" value="TreeGrafter"/>
</dbReference>
<dbReference type="GO" id="GO:0003677">
    <property type="term" value="F:DNA binding"/>
    <property type="evidence" value="ECO:0007669"/>
    <property type="project" value="UniProtKB-UniRule"/>
</dbReference>
<dbReference type="GO" id="GO:0030527">
    <property type="term" value="F:structural constituent of chromatin"/>
    <property type="evidence" value="ECO:0007669"/>
    <property type="project" value="InterPro"/>
</dbReference>
<dbReference type="GO" id="GO:0006310">
    <property type="term" value="P:DNA recombination"/>
    <property type="evidence" value="ECO:0007669"/>
    <property type="project" value="UniProtKB-UniRule"/>
</dbReference>
<dbReference type="GO" id="GO:0006355">
    <property type="term" value="P:regulation of DNA-templated transcription"/>
    <property type="evidence" value="ECO:0007669"/>
    <property type="project" value="UniProtKB-UniRule"/>
</dbReference>
<dbReference type="GO" id="GO:0006417">
    <property type="term" value="P:regulation of translation"/>
    <property type="evidence" value="ECO:0007669"/>
    <property type="project" value="UniProtKB-UniRule"/>
</dbReference>
<dbReference type="CDD" id="cd13836">
    <property type="entry name" value="IHF_B"/>
    <property type="match status" value="1"/>
</dbReference>
<dbReference type="FunFam" id="4.10.520.10:FF:000003">
    <property type="entry name" value="Integration host factor subunit beta"/>
    <property type="match status" value="1"/>
</dbReference>
<dbReference type="Gene3D" id="4.10.520.10">
    <property type="entry name" value="IHF-like DNA-binding proteins"/>
    <property type="match status" value="1"/>
</dbReference>
<dbReference type="HAMAP" id="MF_00381">
    <property type="entry name" value="IHF_beta"/>
    <property type="match status" value="1"/>
</dbReference>
<dbReference type="InterPro" id="IPR000119">
    <property type="entry name" value="Hist_DNA-bd"/>
</dbReference>
<dbReference type="InterPro" id="IPR020816">
    <property type="entry name" value="Histone-like_DNA-bd_CS"/>
</dbReference>
<dbReference type="InterPro" id="IPR010992">
    <property type="entry name" value="IHF-like_DNA-bd_dom_sf"/>
</dbReference>
<dbReference type="InterPro" id="IPR005685">
    <property type="entry name" value="IHF_beta"/>
</dbReference>
<dbReference type="NCBIfam" id="TIGR00988">
    <property type="entry name" value="hip"/>
    <property type="match status" value="1"/>
</dbReference>
<dbReference type="NCBIfam" id="NF001222">
    <property type="entry name" value="PRK00199.1"/>
    <property type="match status" value="1"/>
</dbReference>
<dbReference type="PANTHER" id="PTHR33175">
    <property type="entry name" value="DNA-BINDING PROTEIN HU"/>
    <property type="match status" value="1"/>
</dbReference>
<dbReference type="PANTHER" id="PTHR33175:SF5">
    <property type="entry name" value="INTEGRATION HOST FACTOR SUBUNIT BETA"/>
    <property type="match status" value="1"/>
</dbReference>
<dbReference type="Pfam" id="PF00216">
    <property type="entry name" value="Bac_DNA_binding"/>
    <property type="match status" value="1"/>
</dbReference>
<dbReference type="PRINTS" id="PR01727">
    <property type="entry name" value="DNABINDINGHU"/>
</dbReference>
<dbReference type="SMART" id="SM00411">
    <property type="entry name" value="BHL"/>
    <property type="match status" value="1"/>
</dbReference>
<dbReference type="SUPFAM" id="SSF47729">
    <property type="entry name" value="IHF-like DNA-binding proteins"/>
    <property type="match status" value="1"/>
</dbReference>
<dbReference type="PROSITE" id="PS00045">
    <property type="entry name" value="HISTONE_LIKE"/>
    <property type="match status" value="1"/>
</dbReference>
<gene>
    <name evidence="1" type="primary">ihfB</name>
    <name evidence="1" type="synonym">himD</name>
    <name type="ordered locus">MCA1411</name>
</gene>
<proteinExistence type="inferred from homology"/>
<organism>
    <name type="scientific">Methylococcus capsulatus (strain ATCC 33009 / NCIMB 11132 / Bath)</name>
    <dbReference type="NCBI Taxonomy" id="243233"/>
    <lineage>
        <taxon>Bacteria</taxon>
        <taxon>Pseudomonadati</taxon>
        <taxon>Pseudomonadota</taxon>
        <taxon>Gammaproteobacteria</taxon>
        <taxon>Methylococcales</taxon>
        <taxon>Methylococcaceae</taxon>
        <taxon>Methylococcus</taxon>
    </lineage>
</organism>
<name>IHFB_METCA</name>